<name>S14L2_RAT</name>
<evidence type="ECO:0000250" key="1"/>
<evidence type="ECO:0000250" key="2">
    <source>
        <dbReference type="UniProtKB" id="Q99J08"/>
    </source>
</evidence>
<evidence type="ECO:0000255" key="3">
    <source>
        <dbReference type="PROSITE-ProRule" id="PRU00056"/>
    </source>
</evidence>
<evidence type="ECO:0000255" key="4">
    <source>
        <dbReference type="PROSITE-ProRule" id="PRU00096"/>
    </source>
</evidence>
<organism>
    <name type="scientific">Rattus norvegicus</name>
    <name type="common">Rat</name>
    <dbReference type="NCBI Taxonomy" id="10116"/>
    <lineage>
        <taxon>Eukaryota</taxon>
        <taxon>Metazoa</taxon>
        <taxon>Chordata</taxon>
        <taxon>Craniata</taxon>
        <taxon>Vertebrata</taxon>
        <taxon>Euteleostomi</taxon>
        <taxon>Mammalia</taxon>
        <taxon>Eutheria</taxon>
        <taxon>Euarchontoglires</taxon>
        <taxon>Glires</taxon>
        <taxon>Rodentia</taxon>
        <taxon>Myomorpha</taxon>
        <taxon>Muroidea</taxon>
        <taxon>Muridae</taxon>
        <taxon>Murinae</taxon>
        <taxon>Rattus</taxon>
    </lineage>
</organism>
<comment type="function">
    <text evidence="1">Carrier protein. Binds to some hydrophobic molecules and promotes their transfer between the different cellular sites. Binds with high affinity to alpha-tocopherol. Also binds with a weaker affinity to other tocopherols and to tocotrienols. May have a transcriptional activatory activity via its association with alpha-tocopherol (By similarity). Probably recognizes and binds some squalene structure, suggesting that it may regulate cholesterol biosynthesis by increasing the transfer of squalene to a metabolic active pool in the cell.</text>
</comment>
<comment type="subunit">
    <text evidence="1">Monomer.</text>
</comment>
<comment type="subcellular location">
    <subcellularLocation>
        <location evidence="1">Cytoplasm</location>
    </subcellularLocation>
    <subcellularLocation>
        <location evidence="1">Nucleus</location>
    </subcellularLocation>
    <text evidence="1">Cytoplasmic in absence of alpha-tocopherol, and nuclear in presence of alpha-tocopherol.</text>
</comment>
<comment type="alternative products">
    <event type="alternative splicing"/>
    <isoform>
        <id>Q99MS0-1</id>
        <name>1</name>
        <sequence type="displayed"/>
    </isoform>
    <isoform>
        <id>Q99MS0-2</id>
        <name>2</name>
        <sequence type="not described"/>
    </isoform>
    <isoform>
        <id>Q99MS0-3</id>
        <name>3</name>
        <sequence type="not described"/>
    </isoform>
    <text>Experimental confirmation may be lacking for some isoforms.</text>
</comment>
<comment type="tissue specificity">
    <text>Widely expressed. High expression in liver and small intestine.</text>
</comment>
<sequence>MSGRVGDLSPKQEEALAKFRENVQDVLPALPNPDDYFLLRWLRARSFDLQKSEAMLRKHVEFRKQKDIDKIISWQPPEVIQQYLSGGRCGYDLDGCPVWYDIIGPLDAKGLLFSASKQDLLRTKMRDCELLLQECTQQTAKLGKKIETITMIYDCEGLGLKHLWKPAVEAYGEFLTMFEENYPETLKRLFVVKAPKLFPVAYNLIKPFLSEDTRKKIMVLGANWKEVLLKHISPDQLPVEYGGTMTDPDGNPKCKSKINYGGDIPKQYYVRDQVKQQYEHSVQISRGSSHQVEYEILFPGCVLRWQFMSEGSDVGFGIFLKTKMGERQRAGEMTEVLPNQRYNSHMVPEDGTLTCSEPGIYVLRFDNTYSFIHAKKVSFTVEVLLPDKAAEEKLNQQGAVTPK</sequence>
<gene>
    <name type="primary">Sec14l2</name>
</gene>
<feature type="chain" id="PRO_0000210757" description="SEC14-like protein 2">
    <location>
        <begin position="1"/>
        <end position="403"/>
    </location>
</feature>
<feature type="domain" description="CRAL-TRIO" evidence="3">
    <location>
        <begin position="76"/>
        <end position="249"/>
    </location>
</feature>
<feature type="domain" description="GOLD" evidence="4">
    <location>
        <begin position="275"/>
        <end position="383"/>
    </location>
</feature>
<feature type="modified residue" description="N6-succinyllysine" evidence="2">
    <location>
        <position position="11"/>
    </location>
</feature>
<feature type="modified residue" description="N6-succinyllysine" evidence="2">
    <location>
        <position position="51"/>
    </location>
</feature>
<feature type="modified residue" description="N6-succinyllysine" evidence="2">
    <location>
        <position position="253"/>
    </location>
</feature>
<feature type="modified residue" description="N6-succinyllysine" evidence="2">
    <location>
        <position position="257"/>
    </location>
</feature>
<feature type="modified residue" description="N6-succinyllysine" evidence="2">
    <location>
        <position position="393"/>
    </location>
</feature>
<accession>Q99MS0</accession>
<dbReference type="EMBL" id="AF309558">
    <property type="protein sequence ID" value="AAK16405.1"/>
    <property type="molecule type" value="mRNA"/>
</dbReference>
<dbReference type="SMR" id="Q99MS0"/>
<dbReference type="FunCoup" id="Q99MS0">
    <property type="interactions" value="618"/>
</dbReference>
<dbReference type="STRING" id="10116.ENSRNOP00000006542"/>
<dbReference type="iPTMnet" id="Q99MS0"/>
<dbReference type="PhosphoSitePlus" id="Q99MS0"/>
<dbReference type="jPOST" id="Q99MS0"/>
<dbReference type="PaxDb" id="10116-ENSRNOP00000006542"/>
<dbReference type="UCSC" id="RGD:621779">
    <molecule id="Q99MS0-1"/>
    <property type="organism name" value="rat"/>
</dbReference>
<dbReference type="AGR" id="RGD:621779"/>
<dbReference type="RGD" id="621779">
    <property type="gene designation" value="Sec14l2"/>
</dbReference>
<dbReference type="eggNOG" id="KOG1471">
    <property type="taxonomic scope" value="Eukaryota"/>
</dbReference>
<dbReference type="InParanoid" id="Q99MS0"/>
<dbReference type="OrthoDB" id="1434354at2759"/>
<dbReference type="PhylomeDB" id="Q99MS0"/>
<dbReference type="PRO" id="PR:Q99MS0"/>
<dbReference type="Proteomes" id="UP000002494">
    <property type="component" value="Unplaced"/>
</dbReference>
<dbReference type="GO" id="GO:0005737">
    <property type="term" value="C:cytoplasm"/>
    <property type="evidence" value="ECO:0000318"/>
    <property type="project" value="GO_Central"/>
</dbReference>
<dbReference type="GO" id="GO:0005829">
    <property type="term" value="C:cytosol"/>
    <property type="evidence" value="ECO:0000318"/>
    <property type="project" value="GO_Central"/>
</dbReference>
<dbReference type="GO" id="GO:0005634">
    <property type="term" value="C:nucleus"/>
    <property type="evidence" value="ECO:0007669"/>
    <property type="project" value="UniProtKB-SubCell"/>
</dbReference>
<dbReference type="GO" id="GO:0008047">
    <property type="term" value="F:enzyme activator activity"/>
    <property type="evidence" value="ECO:0000314"/>
    <property type="project" value="RGD"/>
</dbReference>
<dbReference type="GO" id="GO:0008289">
    <property type="term" value="F:lipid binding"/>
    <property type="evidence" value="ECO:0007669"/>
    <property type="project" value="UniProtKB-KW"/>
</dbReference>
<dbReference type="GO" id="GO:0016765">
    <property type="term" value="F:transferase activity, transferring alkyl or aryl (other than methyl) groups"/>
    <property type="evidence" value="ECO:0000314"/>
    <property type="project" value="RGD"/>
</dbReference>
<dbReference type="GO" id="GO:0045542">
    <property type="term" value="P:positive regulation of cholesterol biosynthetic process"/>
    <property type="evidence" value="ECO:0000314"/>
    <property type="project" value="RGD"/>
</dbReference>
<dbReference type="CDD" id="cd00170">
    <property type="entry name" value="SEC14"/>
    <property type="match status" value="1"/>
</dbReference>
<dbReference type="FunFam" id="3.40.525.10:FF:000009">
    <property type="entry name" value="SEC14-like 2 (S. cerevisiae)"/>
    <property type="match status" value="1"/>
</dbReference>
<dbReference type="FunFam" id="2.60.120.680:FF:000001">
    <property type="entry name" value="SEC14-like protein 2 isoform X1"/>
    <property type="match status" value="1"/>
</dbReference>
<dbReference type="Gene3D" id="3.40.525.10">
    <property type="entry name" value="CRAL-TRIO lipid binding domain"/>
    <property type="match status" value="1"/>
</dbReference>
<dbReference type="Gene3D" id="2.60.120.680">
    <property type="entry name" value="GOLD domain"/>
    <property type="match status" value="1"/>
</dbReference>
<dbReference type="InterPro" id="IPR001251">
    <property type="entry name" value="CRAL-TRIO_dom"/>
</dbReference>
<dbReference type="InterPro" id="IPR036865">
    <property type="entry name" value="CRAL-TRIO_dom_sf"/>
</dbReference>
<dbReference type="InterPro" id="IPR011074">
    <property type="entry name" value="CRAL/TRIO_N_dom"/>
</dbReference>
<dbReference type="InterPro" id="IPR036273">
    <property type="entry name" value="CRAL/TRIO_N_dom_sf"/>
</dbReference>
<dbReference type="InterPro" id="IPR009038">
    <property type="entry name" value="GOLD_dom"/>
</dbReference>
<dbReference type="InterPro" id="IPR036598">
    <property type="entry name" value="GOLD_dom_sf"/>
</dbReference>
<dbReference type="InterPro" id="IPR051064">
    <property type="entry name" value="SEC14/CRAL-TRIO_domain"/>
</dbReference>
<dbReference type="PANTHER" id="PTHR23324">
    <property type="entry name" value="SEC14 RELATED PROTEIN"/>
    <property type="match status" value="1"/>
</dbReference>
<dbReference type="PANTHER" id="PTHR23324:SF90">
    <property type="entry name" value="SEC14-LIKE PROTEIN 2"/>
    <property type="match status" value="1"/>
</dbReference>
<dbReference type="Pfam" id="PF00650">
    <property type="entry name" value="CRAL_TRIO"/>
    <property type="match status" value="1"/>
</dbReference>
<dbReference type="Pfam" id="PF03765">
    <property type="entry name" value="CRAL_TRIO_N"/>
    <property type="match status" value="1"/>
</dbReference>
<dbReference type="PRINTS" id="PR00180">
    <property type="entry name" value="CRETINALDHBP"/>
</dbReference>
<dbReference type="SMART" id="SM01100">
    <property type="entry name" value="CRAL_TRIO_N"/>
    <property type="match status" value="1"/>
</dbReference>
<dbReference type="SMART" id="SM00516">
    <property type="entry name" value="SEC14"/>
    <property type="match status" value="1"/>
</dbReference>
<dbReference type="SUPFAM" id="SSF52087">
    <property type="entry name" value="CRAL/TRIO domain"/>
    <property type="match status" value="1"/>
</dbReference>
<dbReference type="SUPFAM" id="SSF46938">
    <property type="entry name" value="CRAL/TRIO N-terminal domain"/>
    <property type="match status" value="1"/>
</dbReference>
<dbReference type="SUPFAM" id="SSF101576">
    <property type="entry name" value="Supernatant protein factor (SPF), C-terminal domain"/>
    <property type="match status" value="1"/>
</dbReference>
<dbReference type="PROSITE" id="PS50191">
    <property type="entry name" value="CRAL_TRIO"/>
    <property type="match status" value="1"/>
</dbReference>
<dbReference type="PROSITE" id="PS50866">
    <property type="entry name" value="GOLD"/>
    <property type="match status" value="1"/>
</dbReference>
<reference key="1">
    <citation type="journal article" date="2001" name="Proc. Natl. Acad. Sci. U.S.A.">
        <title>Supernatant protein factor, which stimulates the conversion of squalene to lanosterol, is a cytosolic squalene transfer protein and enhances cholesterol biosynthesis.</title>
        <authorList>
            <person name="Shibata N."/>
            <person name="Arita M."/>
            <person name="Misaki Y."/>
            <person name="Dohmae N."/>
            <person name="Takio K."/>
            <person name="Ono T."/>
            <person name="Inoue K."/>
            <person name="Arai H."/>
        </authorList>
    </citation>
    <scope>NUCLEOTIDE SEQUENCE [MRNA]</scope>
    <scope>PROTEIN SEQUENCE OF 19-51 AND 231-252</scope>
    <source>
        <strain>Wistar</strain>
        <tissue>Liver</tissue>
    </source>
</reference>
<keyword id="KW-0010">Activator</keyword>
<keyword id="KW-0025">Alternative splicing</keyword>
<keyword id="KW-0963">Cytoplasm</keyword>
<keyword id="KW-0903">Direct protein sequencing</keyword>
<keyword id="KW-0446">Lipid-binding</keyword>
<keyword id="KW-0539">Nucleus</keyword>
<keyword id="KW-1185">Reference proteome</keyword>
<keyword id="KW-0804">Transcription</keyword>
<keyword id="KW-0805">Transcription regulation</keyword>
<keyword id="KW-0813">Transport</keyword>
<proteinExistence type="evidence at protein level"/>
<protein>
    <recommendedName>
        <fullName>SEC14-like protein 2</fullName>
    </recommendedName>
    <alternativeName>
        <fullName>Alpha-tocopherol-associated protein</fullName>
        <shortName>TAP</shortName>
    </alternativeName>
    <alternativeName>
        <fullName>Squalene transfer protein</fullName>
    </alternativeName>
    <alternativeName>
        <fullName>Supernatant protein factor</fullName>
        <shortName>SPF</shortName>
    </alternativeName>
</protein>